<accession>Q63U73</accession>
<feature type="chain" id="PRO_0000182207" description="Arginine deiminase">
    <location>
        <begin position="1"/>
        <end position="418"/>
    </location>
</feature>
<feature type="active site" description="Amidino-cysteine intermediate" evidence="1">
    <location>
        <position position="406"/>
    </location>
</feature>
<reference key="1">
    <citation type="journal article" date="2004" name="Proc. Natl. Acad. Sci. U.S.A.">
        <title>Genomic plasticity of the causative agent of melioidosis, Burkholderia pseudomallei.</title>
        <authorList>
            <person name="Holden M.T.G."/>
            <person name="Titball R.W."/>
            <person name="Peacock S.J."/>
            <person name="Cerdeno-Tarraga A.-M."/>
            <person name="Atkins T."/>
            <person name="Crossman L.C."/>
            <person name="Pitt T."/>
            <person name="Churcher C."/>
            <person name="Mungall K.L."/>
            <person name="Bentley S.D."/>
            <person name="Sebaihia M."/>
            <person name="Thomson N.R."/>
            <person name="Bason N."/>
            <person name="Beacham I.R."/>
            <person name="Brooks K."/>
            <person name="Brown K.A."/>
            <person name="Brown N.F."/>
            <person name="Challis G.L."/>
            <person name="Cherevach I."/>
            <person name="Chillingworth T."/>
            <person name="Cronin A."/>
            <person name="Crossett B."/>
            <person name="Davis P."/>
            <person name="DeShazer D."/>
            <person name="Feltwell T."/>
            <person name="Fraser A."/>
            <person name="Hance Z."/>
            <person name="Hauser H."/>
            <person name="Holroyd S."/>
            <person name="Jagels K."/>
            <person name="Keith K.E."/>
            <person name="Maddison M."/>
            <person name="Moule S."/>
            <person name="Price C."/>
            <person name="Quail M.A."/>
            <person name="Rabbinowitsch E."/>
            <person name="Rutherford K."/>
            <person name="Sanders M."/>
            <person name="Simmonds M."/>
            <person name="Songsivilai S."/>
            <person name="Stevens K."/>
            <person name="Tumapa S."/>
            <person name="Vesaratchavest M."/>
            <person name="Whitehead S."/>
            <person name="Yeats C."/>
            <person name="Barrell B.G."/>
            <person name="Oyston P.C.F."/>
            <person name="Parkhill J."/>
        </authorList>
    </citation>
    <scope>NUCLEOTIDE SEQUENCE [LARGE SCALE GENOMIC DNA]</scope>
    <source>
        <strain>K96243</strain>
    </source>
</reference>
<organism>
    <name type="scientific">Burkholderia pseudomallei (strain K96243)</name>
    <dbReference type="NCBI Taxonomy" id="272560"/>
    <lineage>
        <taxon>Bacteria</taxon>
        <taxon>Pseudomonadati</taxon>
        <taxon>Pseudomonadota</taxon>
        <taxon>Betaproteobacteria</taxon>
        <taxon>Burkholderiales</taxon>
        <taxon>Burkholderiaceae</taxon>
        <taxon>Burkholderia</taxon>
        <taxon>pseudomallei group</taxon>
    </lineage>
</organism>
<sequence>MSQAIPQVGVHSEVGKLRKVLVCSPGLAHQRLTPSNCDELLFDDVMWVNQAKRDHFDFVSKMRERGVEVLEMHNLLTETVQNPAALKWILDRKITPDNVGIGLVDEVRAWLEGLEPRALAEFLIGGVAASDIAGAERSKVLTLFRDYLGKSSFVLPPLPNMMFTRDTSCWIYGGVTLNPMHWPARRQETLLVAAVYKFHPAFTDAKFDVWYGDPDRDHGMATLEGGDVMPIGRGVVLVGMGERTSRQAVGQLAQALFAKGAAERVIVAGLPNSRASMHLDTVFSFCDRDLVTVFPEVVNRIVPFTLRPGGDARYGIDIEREDKPFVDVVAQALGLKSLRVVETGGNDFAAEREQWDDGNNMVCIEPGVVVGYDRNTYTNTLLRKAGVEVITIGSSELGRGRGGGHCMTCPVLRDPVDY</sequence>
<protein>
    <recommendedName>
        <fullName evidence="1">Arginine deiminase</fullName>
        <shortName evidence="1">ADI</shortName>
        <ecNumber evidence="1">3.5.3.6</ecNumber>
    </recommendedName>
    <alternativeName>
        <fullName evidence="1">Arginine dihydrolase</fullName>
        <shortName evidence="1">AD</shortName>
    </alternativeName>
</protein>
<gene>
    <name evidence="1" type="primary">arcA</name>
    <name type="ordered locus">BPSL1743</name>
</gene>
<dbReference type="EC" id="3.5.3.6" evidence="1"/>
<dbReference type="EMBL" id="BX571965">
    <property type="protein sequence ID" value="CAH35742.1"/>
    <property type="molecule type" value="Genomic_DNA"/>
</dbReference>
<dbReference type="RefSeq" id="WP_004526983.1">
    <property type="nucleotide sequence ID" value="NZ_CP009538.1"/>
</dbReference>
<dbReference type="RefSeq" id="YP_108343.1">
    <property type="nucleotide sequence ID" value="NC_006350.1"/>
</dbReference>
<dbReference type="SMR" id="Q63U73"/>
<dbReference type="STRING" id="272560.BPSL1743"/>
<dbReference type="GeneID" id="93060265"/>
<dbReference type="KEGG" id="bps:BPSL1743"/>
<dbReference type="PATRIC" id="fig|272560.51.peg.3842"/>
<dbReference type="eggNOG" id="COG2235">
    <property type="taxonomic scope" value="Bacteria"/>
</dbReference>
<dbReference type="UniPathway" id="UPA00254">
    <property type="reaction ID" value="UER00364"/>
</dbReference>
<dbReference type="Proteomes" id="UP000000605">
    <property type="component" value="Chromosome 1"/>
</dbReference>
<dbReference type="GO" id="GO:0005737">
    <property type="term" value="C:cytoplasm"/>
    <property type="evidence" value="ECO:0007669"/>
    <property type="project" value="UniProtKB-SubCell"/>
</dbReference>
<dbReference type="GO" id="GO:0016990">
    <property type="term" value="F:arginine deiminase activity"/>
    <property type="evidence" value="ECO:0007669"/>
    <property type="project" value="UniProtKB-UniRule"/>
</dbReference>
<dbReference type="GO" id="GO:0019547">
    <property type="term" value="P:arginine catabolic process to ornithine"/>
    <property type="evidence" value="ECO:0007669"/>
    <property type="project" value="UniProtKB-UniRule"/>
</dbReference>
<dbReference type="GO" id="GO:0019546">
    <property type="term" value="P:arginine deiminase pathway"/>
    <property type="evidence" value="ECO:0007669"/>
    <property type="project" value="TreeGrafter"/>
</dbReference>
<dbReference type="Gene3D" id="1.10.3930.10">
    <property type="entry name" value="Arginine deiminase"/>
    <property type="match status" value="1"/>
</dbReference>
<dbReference type="Gene3D" id="3.75.10.10">
    <property type="entry name" value="L-arginine/glycine Amidinotransferase, Chain A"/>
    <property type="match status" value="1"/>
</dbReference>
<dbReference type="HAMAP" id="MF_00242">
    <property type="entry name" value="Arg_deiminase"/>
    <property type="match status" value="1"/>
</dbReference>
<dbReference type="InterPro" id="IPR003876">
    <property type="entry name" value="Arg_deiminase"/>
</dbReference>
<dbReference type="NCBIfam" id="TIGR01078">
    <property type="entry name" value="arcA"/>
    <property type="match status" value="1"/>
</dbReference>
<dbReference type="NCBIfam" id="NF002381">
    <property type="entry name" value="PRK01388.1"/>
    <property type="match status" value="1"/>
</dbReference>
<dbReference type="PANTHER" id="PTHR47271">
    <property type="entry name" value="ARGININE DEIMINASE"/>
    <property type="match status" value="1"/>
</dbReference>
<dbReference type="PANTHER" id="PTHR47271:SF3">
    <property type="entry name" value="ARGININE DEIMINASE"/>
    <property type="match status" value="1"/>
</dbReference>
<dbReference type="Pfam" id="PF02274">
    <property type="entry name" value="ADI"/>
    <property type="match status" value="1"/>
</dbReference>
<dbReference type="PIRSF" id="PIRSF006356">
    <property type="entry name" value="Arg_deiminase"/>
    <property type="match status" value="1"/>
</dbReference>
<dbReference type="PRINTS" id="PR01466">
    <property type="entry name" value="ARGDEIMINASE"/>
</dbReference>
<dbReference type="SUPFAM" id="SSF55909">
    <property type="entry name" value="Pentein"/>
    <property type="match status" value="1"/>
</dbReference>
<evidence type="ECO:0000255" key="1">
    <source>
        <dbReference type="HAMAP-Rule" id="MF_00242"/>
    </source>
</evidence>
<keyword id="KW-0056">Arginine metabolism</keyword>
<keyword id="KW-0963">Cytoplasm</keyword>
<keyword id="KW-0378">Hydrolase</keyword>
<keyword id="KW-1185">Reference proteome</keyword>
<proteinExistence type="inferred from homology"/>
<comment type="catalytic activity">
    <reaction evidence="1">
        <text>L-arginine + H2O = L-citrulline + NH4(+)</text>
        <dbReference type="Rhea" id="RHEA:19597"/>
        <dbReference type="ChEBI" id="CHEBI:15377"/>
        <dbReference type="ChEBI" id="CHEBI:28938"/>
        <dbReference type="ChEBI" id="CHEBI:32682"/>
        <dbReference type="ChEBI" id="CHEBI:57743"/>
        <dbReference type="EC" id="3.5.3.6"/>
    </reaction>
</comment>
<comment type="pathway">
    <text evidence="1">Amino-acid degradation; L-arginine degradation via ADI pathway; carbamoyl phosphate from L-arginine: step 1/2.</text>
</comment>
<comment type="subcellular location">
    <subcellularLocation>
        <location evidence="1">Cytoplasm</location>
    </subcellularLocation>
</comment>
<comment type="similarity">
    <text evidence="1">Belongs to the arginine deiminase family.</text>
</comment>
<name>ARCA_BURPS</name>